<keyword id="KW-0067">ATP-binding</keyword>
<keyword id="KW-0436">Ligase</keyword>
<keyword id="KW-0460">Magnesium</keyword>
<keyword id="KW-0464">Manganese</keyword>
<keyword id="KW-0479">Metal-binding</keyword>
<keyword id="KW-0547">Nucleotide-binding</keyword>
<keyword id="KW-0658">Purine biosynthesis</keyword>
<evidence type="ECO:0000250" key="1"/>
<evidence type="ECO:0000255" key="2">
    <source>
        <dbReference type="HAMAP-Rule" id="MF_00138"/>
    </source>
</evidence>
<proteinExistence type="inferred from homology"/>
<name>PUR2_METM7</name>
<dbReference type="EC" id="6.3.4.13" evidence="2"/>
<dbReference type="EMBL" id="CP000745">
    <property type="protein sequence ID" value="ABR66453.1"/>
    <property type="molecule type" value="Genomic_DNA"/>
</dbReference>
<dbReference type="SMR" id="A6VJ27"/>
<dbReference type="STRING" id="426368.MmarC7_1390"/>
<dbReference type="KEGG" id="mmz:MmarC7_1390"/>
<dbReference type="eggNOG" id="arCOG04415">
    <property type="taxonomic scope" value="Archaea"/>
</dbReference>
<dbReference type="HOGENOM" id="CLU_027420_3_0_2"/>
<dbReference type="OrthoDB" id="146558at2157"/>
<dbReference type="UniPathway" id="UPA00074">
    <property type="reaction ID" value="UER00125"/>
</dbReference>
<dbReference type="GO" id="GO:0005524">
    <property type="term" value="F:ATP binding"/>
    <property type="evidence" value="ECO:0007669"/>
    <property type="project" value="UniProtKB-KW"/>
</dbReference>
<dbReference type="GO" id="GO:0046872">
    <property type="term" value="F:metal ion binding"/>
    <property type="evidence" value="ECO:0007669"/>
    <property type="project" value="UniProtKB-KW"/>
</dbReference>
<dbReference type="GO" id="GO:0004637">
    <property type="term" value="F:phosphoribosylamine-glycine ligase activity"/>
    <property type="evidence" value="ECO:0007669"/>
    <property type="project" value="UniProtKB-UniRule"/>
</dbReference>
<dbReference type="GO" id="GO:0006189">
    <property type="term" value="P:'de novo' IMP biosynthetic process"/>
    <property type="evidence" value="ECO:0007669"/>
    <property type="project" value="UniProtKB-UniRule"/>
</dbReference>
<dbReference type="GO" id="GO:0009113">
    <property type="term" value="P:purine nucleobase biosynthetic process"/>
    <property type="evidence" value="ECO:0007669"/>
    <property type="project" value="InterPro"/>
</dbReference>
<dbReference type="Gene3D" id="3.40.50.20">
    <property type="match status" value="1"/>
</dbReference>
<dbReference type="Gene3D" id="3.30.1490.20">
    <property type="entry name" value="ATP-grasp fold, A domain"/>
    <property type="match status" value="1"/>
</dbReference>
<dbReference type="Gene3D" id="3.30.470.20">
    <property type="entry name" value="ATP-grasp fold, B domain"/>
    <property type="match status" value="1"/>
</dbReference>
<dbReference type="Gene3D" id="3.90.600.10">
    <property type="entry name" value="Phosphoribosylglycinamide synthetase, C-terminal domain"/>
    <property type="match status" value="1"/>
</dbReference>
<dbReference type="HAMAP" id="MF_00138">
    <property type="entry name" value="GARS"/>
    <property type="match status" value="1"/>
</dbReference>
<dbReference type="InterPro" id="IPR011761">
    <property type="entry name" value="ATP-grasp"/>
</dbReference>
<dbReference type="InterPro" id="IPR013815">
    <property type="entry name" value="ATP_grasp_subdomain_1"/>
</dbReference>
<dbReference type="InterPro" id="IPR016185">
    <property type="entry name" value="PreATP-grasp_dom_sf"/>
</dbReference>
<dbReference type="InterPro" id="IPR020561">
    <property type="entry name" value="PRibGlycinamid_synth_ATP-grasp"/>
</dbReference>
<dbReference type="InterPro" id="IPR000115">
    <property type="entry name" value="PRibGlycinamide_synth"/>
</dbReference>
<dbReference type="InterPro" id="IPR020560">
    <property type="entry name" value="PRibGlycinamide_synth_C-dom"/>
</dbReference>
<dbReference type="InterPro" id="IPR037123">
    <property type="entry name" value="PRibGlycinamide_synth_C_sf"/>
</dbReference>
<dbReference type="InterPro" id="IPR020559">
    <property type="entry name" value="PRibGlycinamide_synth_CS"/>
</dbReference>
<dbReference type="InterPro" id="IPR020562">
    <property type="entry name" value="PRibGlycinamide_synth_N"/>
</dbReference>
<dbReference type="InterPro" id="IPR011054">
    <property type="entry name" value="Rudment_hybrid_motif"/>
</dbReference>
<dbReference type="NCBIfam" id="TIGR00877">
    <property type="entry name" value="purD"/>
    <property type="match status" value="1"/>
</dbReference>
<dbReference type="PANTHER" id="PTHR43472">
    <property type="entry name" value="PHOSPHORIBOSYLAMINE--GLYCINE LIGASE"/>
    <property type="match status" value="1"/>
</dbReference>
<dbReference type="PANTHER" id="PTHR43472:SF1">
    <property type="entry name" value="PHOSPHORIBOSYLAMINE--GLYCINE LIGASE, CHLOROPLASTIC"/>
    <property type="match status" value="1"/>
</dbReference>
<dbReference type="Pfam" id="PF01071">
    <property type="entry name" value="GARS_A"/>
    <property type="match status" value="1"/>
</dbReference>
<dbReference type="Pfam" id="PF02843">
    <property type="entry name" value="GARS_C"/>
    <property type="match status" value="1"/>
</dbReference>
<dbReference type="Pfam" id="PF02844">
    <property type="entry name" value="GARS_N"/>
    <property type="match status" value="1"/>
</dbReference>
<dbReference type="SMART" id="SM01209">
    <property type="entry name" value="GARS_A"/>
    <property type="match status" value="1"/>
</dbReference>
<dbReference type="SMART" id="SM01210">
    <property type="entry name" value="GARS_C"/>
    <property type="match status" value="1"/>
</dbReference>
<dbReference type="SUPFAM" id="SSF56059">
    <property type="entry name" value="Glutathione synthetase ATP-binding domain-like"/>
    <property type="match status" value="1"/>
</dbReference>
<dbReference type="SUPFAM" id="SSF52440">
    <property type="entry name" value="PreATP-grasp domain"/>
    <property type="match status" value="1"/>
</dbReference>
<dbReference type="SUPFAM" id="SSF51246">
    <property type="entry name" value="Rudiment single hybrid motif"/>
    <property type="match status" value="1"/>
</dbReference>
<dbReference type="PROSITE" id="PS50975">
    <property type="entry name" value="ATP_GRASP"/>
    <property type="match status" value="1"/>
</dbReference>
<dbReference type="PROSITE" id="PS00184">
    <property type="entry name" value="GARS"/>
    <property type="match status" value="1"/>
</dbReference>
<sequence length="444" mass="48742">MKVLLIGGGAREHAIAMALKKNELVELYTLMKNKNPGIYALSEEVSFNSETDVPAIKEFAEKIKPEIAVIGPESPLGVGAADLLEEMGIPTVGPKKLPAQIETSKEFMRNLFKKYEIDGSLKYAAFNEYGNEIESFIDEMTSLGKDVVVKPAGLTGGKGVKVVGEQLKDNDEAKIYAKEVFDKSIGGGKIIIEEKLVGVEFTLHGFVDGENITFMPAVQDHPHAYNNDEGPITGGMGSYSCPNHGLPFISEDMLDRAEKIMEKTVNSINLEVGPYKGFLYGQFMLTADGPKIIEYNARFGDPEAMNLLPILKTDFLDVCFAIAEGKLDKMNIEFENKATVCKYVVPNGYPIDPVKNKELAVAEKAIEDAGAILFYASINEENGKLYITGSRSAAVVGISENIEEAEKIAQKAIENFKGEVYYRSDIGTLDLIKKRIERVKKLAK</sequence>
<protein>
    <recommendedName>
        <fullName evidence="2">Phosphoribosylamine--glycine ligase</fullName>
        <ecNumber evidence="2">6.3.4.13</ecNumber>
    </recommendedName>
    <alternativeName>
        <fullName evidence="2">GARS</fullName>
    </alternativeName>
    <alternativeName>
        <fullName evidence="2">Glycinamide ribonucleotide synthetase</fullName>
    </alternativeName>
    <alternativeName>
        <fullName evidence="2">Phosphoribosylglycinamide synthetase</fullName>
    </alternativeName>
</protein>
<accession>A6VJ27</accession>
<comment type="catalytic activity">
    <reaction evidence="2">
        <text>5-phospho-beta-D-ribosylamine + glycine + ATP = N(1)-(5-phospho-beta-D-ribosyl)glycinamide + ADP + phosphate + H(+)</text>
        <dbReference type="Rhea" id="RHEA:17453"/>
        <dbReference type="ChEBI" id="CHEBI:15378"/>
        <dbReference type="ChEBI" id="CHEBI:30616"/>
        <dbReference type="ChEBI" id="CHEBI:43474"/>
        <dbReference type="ChEBI" id="CHEBI:57305"/>
        <dbReference type="ChEBI" id="CHEBI:58681"/>
        <dbReference type="ChEBI" id="CHEBI:143788"/>
        <dbReference type="ChEBI" id="CHEBI:456216"/>
        <dbReference type="EC" id="6.3.4.13"/>
    </reaction>
</comment>
<comment type="cofactor">
    <cofactor evidence="1">
        <name>Mg(2+)</name>
        <dbReference type="ChEBI" id="CHEBI:18420"/>
    </cofactor>
    <cofactor evidence="1">
        <name>Mn(2+)</name>
        <dbReference type="ChEBI" id="CHEBI:29035"/>
    </cofactor>
    <text evidence="1">Binds 2 magnesium or manganese ions per subunit.</text>
</comment>
<comment type="pathway">
    <text evidence="2">Purine metabolism; IMP biosynthesis via de novo pathway; N(1)-(5-phospho-D-ribosyl)glycinamide from 5-phospho-alpha-D-ribose 1-diphosphate: step 2/2.</text>
</comment>
<comment type="similarity">
    <text evidence="2">Belongs to the GARS family.</text>
</comment>
<organism>
    <name type="scientific">Methanococcus maripaludis (strain C7 / ATCC BAA-1331)</name>
    <dbReference type="NCBI Taxonomy" id="426368"/>
    <lineage>
        <taxon>Archaea</taxon>
        <taxon>Methanobacteriati</taxon>
        <taxon>Methanobacteriota</taxon>
        <taxon>Methanomada group</taxon>
        <taxon>Methanococci</taxon>
        <taxon>Methanococcales</taxon>
        <taxon>Methanococcaceae</taxon>
        <taxon>Methanococcus</taxon>
    </lineage>
</organism>
<gene>
    <name evidence="2" type="primary">purD</name>
    <name type="ordered locus">MmarC7_1390</name>
</gene>
<feature type="chain" id="PRO_1000018825" description="Phosphoribosylamine--glycine ligase">
    <location>
        <begin position="1"/>
        <end position="444"/>
    </location>
</feature>
<feature type="domain" description="ATP-grasp" evidence="2">
    <location>
        <begin position="109"/>
        <end position="324"/>
    </location>
</feature>
<feature type="binding site" evidence="2">
    <location>
        <begin position="140"/>
        <end position="202"/>
    </location>
    <ligand>
        <name>ATP</name>
        <dbReference type="ChEBI" id="CHEBI:30616"/>
    </ligand>
</feature>
<feature type="binding site" evidence="2">
    <location>
        <position position="282"/>
    </location>
    <ligand>
        <name>Mg(2+)</name>
        <dbReference type="ChEBI" id="CHEBI:18420"/>
        <label>1</label>
    </ligand>
</feature>
<feature type="binding site" evidence="2">
    <location>
        <position position="282"/>
    </location>
    <ligand>
        <name>Mn(2+)</name>
        <dbReference type="ChEBI" id="CHEBI:29035"/>
        <label>1</label>
    </ligand>
</feature>
<feature type="binding site" evidence="2">
    <location>
        <position position="294"/>
    </location>
    <ligand>
        <name>Mg(2+)</name>
        <dbReference type="ChEBI" id="CHEBI:18420"/>
        <label>1</label>
    </ligand>
</feature>
<feature type="binding site" evidence="2">
    <location>
        <position position="294"/>
    </location>
    <ligand>
        <name>Mg(2+)</name>
        <dbReference type="ChEBI" id="CHEBI:18420"/>
        <label>2</label>
    </ligand>
</feature>
<feature type="binding site" evidence="2">
    <location>
        <position position="294"/>
    </location>
    <ligand>
        <name>Mn(2+)</name>
        <dbReference type="ChEBI" id="CHEBI:29035"/>
        <label>1</label>
    </ligand>
</feature>
<feature type="binding site" evidence="2">
    <location>
        <position position="294"/>
    </location>
    <ligand>
        <name>Mn(2+)</name>
        <dbReference type="ChEBI" id="CHEBI:29035"/>
        <label>2</label>
    </ligand>
</feature>
<feature type="binding site" evidence="2">
    <location>
        <position position="296"/>
    </location>
    <ligand>
        <name>Mg(2+)</name>
        <dbReference type="ChEBI" id="CHEBI:18420"/>
        <label>2</label>
    </ligand>
</feature>
<feature type="binding site" evidence="2">
    <location>
        <position position="296"/>
    </location>
    <ligand>
        <name>Mn(2+)</name>
        <dbReference type="ChEBI" id="CHEBI:29035"/>
        <label>2</label>
    </ligand>
</feature>
<reference key="1">
    <citation type="submission" date="2007-06" db="EMBL/GenBank/DDBJ databases">
        <title>Complete sequence of Methanococcus maripaludis C7.</title>
        <authorList>
            <consortium name="US DOE Joint Genome Institute"/>
            <person name="Copeland A."/>
            <person name="Lucas S."/>
            <person name="Lapidus A."/>
            <person name="Barry K."/>
            <person name="Glavina del Rio T."/>
            <person name="Dalin E."/>
            <person name="Tice H."/>
            <person name="Pitluck S."/>
            <person name="Clum A."/>
            <person name="Schmutz J."/>
            <person name="Larimer F."/>
            <person name="Land M."/>
            <person name="Hauser L."/>
            <person name="Kyrpides N."/>
            <person name="Anderson I."/>
            <person name="Sieprawska-Lupa M."/>
            <person name="Whitman W.B."/>
            <person name="Richardson P."/>
        </authorList>
    </citation>
    <scope>NUCLEOTIDE SEQUENCE [LARGE SCALE GENOMIC DNA]</scope>
    <source>
        <strain>C7 / ATCC BAA-1331</strain>
    </source>
</reference>